<feature type="chain" id="PRO_0000327411" description="Probable ATP-dependent RNA helicase ddx17">
    <location>
        <begin position="1"/>
        <end position="785"/>
    </location>
</feature>
<feature type="domain" description="Helicase ATP-binding" evidence="2">
    <location>
        <begin position="415"/>
        <end position="590"/>
    </location>
</feature>
<feature type="domain" description="Helicase C-terminal" evidence="3">
    <location>
        <begin position="602"/>
        <end position="763"/>
    </location>
</feature>
<feature type="region of interest" description="Disordered" evidence="4">
    <location>
        <begin position="1"/>
        <end position="233"/>
    </location>
</feature>
<feature type="region of interest" description="Disordered" evidence="4">
    <location>
        <begin position="764"/>
        <end position="785"/>
    </location>
</feature>
<feature type="short sequence motif" description="Q motif">
    <location>
        <begin position="384"/>
        <end position="412"/>
    </location>
</feature>
<feature type="short sequence motif" description="DEAD box">
    <location>
        <begin position="538"/>
        <end position="541"/>
    </location>
</feature>
<feature type="compositionally biased region" description="Low complexity" evidence="4">
    <location>
        <begin position="1"/>
        <end position="11"/>
    </location>
</feature>
<feature type="compositionally biased region" description="Low complexity" evidence="4">
    <location>
        <begin position="18"/>
        <end position="37"/>
    </location>
</feature>
<feature type="compositionally biased region" description="Low complexity" evidence="4">
    <location>
        <begin position="49"/>
        <end position="95"/>
    </location>
</feature>
<feature type="compositionally biased region" description="Low complexity" evidence="4">
    <location>
        <begin position="105"/>
        <end position="177"/>
    </location>
</feature>
<feature type="compositionally biased region" description="Polar residues" evidence="4">
    <location>
        <begin position="178"/>
        <end position="191"/>
    </location>
</feature>
<feature type="compositionally biased region" description="Low complexity" evidence="4">
    <location>
        <begin position="192"/>
        <end position="233"/>
    </location>
</feature>
<feature type="compositionally biased region" description="Polar residues" evidence="4">
    <location>
        <begin position="764"/>
        <end position="774"/>
    </location>
</feature>
<feature type="binding site" evidence="2">
    <location>
        <begin position="428"/>
        <end position="435"/>
    </location>
    <ligand>
        <name>ATP</name>
        <dbReference type="ChEBI" id="CHEBI:30616"/>
    </ligand>
</feature>
<evidence type="ECO:0000250" key="1"/>
<evidence type="ECO:0000255" key="2">
    <source>
        <dbReference type="PROSITE-ProRule" id="PRU00541"/>
    </source>
</evidence>
<evidence type="ECO:0000255" key="3">
    <source>
        <dbReference type="PROSITE-ProRule" id="PRU00542"/>
    </source>
</evidence>
<evidence type="ECO:0000256" key="4">
    <source>
        <dbReference type="SAM" id="MobiDB-lite"/>
    </source>
</evidence>
<evidence type="ECO:0000305" key="5"/>
<protein>
    <recommendedName>
        <fullName>Probable ATP-dependent RNA helicase ddx17</fullName>
        <ecNumber>3.6.4.13</ecNumber>
    </recommendedName>
    <alternativeName>
        <fullName>DEAD box protein 17</fullName>
    </alternativeName>
</protein>
<organism>
    <name type="scientific">Dictyostelium discoideum</name>
    <name type="common">Social amoeba</name>
    <dbReference type="NCBI Taxonomy" id="44689"/>
    <lineage>
        <taxon>Eukaryota</taxon>
        <taxon>Amoebozoa</taxon>
        <taxon>Evosea</taxon>
        <taxon>Eumycetozoa</taxon>
        <taxon>Dictyostelia</taxon>
        <taxon>Dictyosteliales</taxon>
        <taxon>Dictyosteliaceae</taxon>
        <taxon>Dictyostelium</taxon>
    </lineage>
</organism>
<comment type="function">
    <text evidence="1">Probable ATP-dependent RNA helicase which may be involved nonsense-mediated mRNA decay and ribosome biogenesis through rRNA processing.</text>
</comment>
<comment type="catalytic activity">
    <reaction>
        <text>ATP + H2O = ADP + phosphate + H(+)</text>
        <dbReference type="Rhea" id="RHEA:13065"/>
        <dbReference type="ChEBI" id="CHEBI:15377"/>
        <dbReference type="ChEBI" id="CHEBI:15378"/>
        <dbReference type="ChEBI" id="CHEBI:30616"/>
        <dbReference type="ChEBI" id="CHEBI:43474"/>
        <dbReference type="ChEBI" id="CHEBI:456216"/>
        <dbReference type="EC" id="3.6.4.13"/>
    </reaction>
</comment>
<comment type="subcellular location">
    <subcellularLocation>
        <location evidence="1">Cytoplasm</location>
    </subcellularLocation>
    <subcellularLocation>
        <location evidence="1">Nucleus</location>
    </subcellularLocation>
</comment>
<comment type="domain">
    <text>The Q motif is unique to and characteristic of the DEAD box family of RNA helicases and controls ATP binding and hydrolysis.</text>
</comment>
<comment type="similarity">
    <text evidence="5">Belongs to the DEAD box helicase family. DDX5/DBP2 subfamily.</text>
</comment>
<keyword id="KW-0067">ATP-binding</keyword>
<keyword id="KW-0963">Cytoplasm</keyword>
<keyword id="KW-0347">Helicase</keyword>
<keyword id="KW-0378">Hydrolase</keyword>
<keyword id="KW-0866">Nonsense-mediated mRNA decay</keyword>
<keyword id="KW-0547">Nucleotide-binding</keyword>
<keyword id="KW-0539">Nucleus</keyword>
<keyword id="KW-1185">Reference proteome</keyword>
<keyword id="KW-0690">Ribosome biogenesis</keyword>
<keyword id="KW-0694">RNA-binding</keyword>
<keyword id="KW-0698">rRNA processing</keyword>
<accession>Q54CE0</accession>
<gene>
    <name type="primary">ddx17</name>
    <name type="ORF">DDB_G0293168</name>
</gene>
<sequence>MSYNSSNSGSGRYDDNRSGNSSYSSTSRGGSSYGNRSGSDRDYNRDGGSYNRDSSRDYNSSSGSGSGNGSSSYNKYPSSSSSSSSSSSTSSYGPSKGKDFQDSWGSSSTGTTNGYNGSSNGYNSSSNGYNSSNSSSSYGASNNGYNNSSGSSSSGSSGSSNGGSYNNSGSSNSNGYSKPTSNYSYSNGYTGPTTNYSSYSNGYSTPPTSTSTSSSSTTTTTTTTPSTSYNGGSTSYGYSTSGSSNGYGGYSQPPIPSYDPSSVSSYGAVTPASSSYNASVPGSSYGNSTYRSSGYGNQSYATTNSYGSSSYGSSGFYGNAKANTGSFGSALSPISWDLSKLPRFEKNFYLEHPDVSKFTQEEIEKFRASFQMTVKGREVPPPIMQFTQAPFPGYLMKEIIGAGFPNPTPIQSQAWPIALKGRDIIGLAKTGSGKTLAFLLPSIVHINAQPVLREDDGPIVLVLAPTRELALQIQEETNKFGGTSQISNTCVYGGASKHTQVAALKKGVEIVIATPGRLIDILESGKTNLRRVTYLVLDEADRMLDMGFEPQIRKIISQIRPDRQTLMFSATWPKEVQALAHDFLTDHIQVHIGSTEITANHNVRQIVEVCQDFEKKERMLSFLGSVGRDEKVIVFAETRKGVDDLQRVLQFSGFKSIGIHGNKSQPERDFVLSQFKNGMVPIMIATDVASRGLDIKDIKYVVNYDFPNTIEVYIHRIGRTARAGASGVSYSLLTTDNARLANELIKVLTEAKQKIPIELSNLSVTPSTSSNTKKFSPYPTYSKRY</sequence>
<dbReference type="EC" id="3.6.4.13"/>
<dbReference type="EMBL" id="AAFI02000199">
    <property type="protein sequence ID" value="EAL60936.1"/>
    <property type="molecule type" value="Genomic_DNA"/>
</dbReference>
<dbReference type="RefSeq" id="XP_629279.1">
    <property type="nucleotide sequence ID" value="XM_629277.1"/>
</dbReference>
<dbReference type="SMR" id="Q54CE0"/>
<dbReference type="FunCoup" id="Q54CE0">
    <property type="interactions" value="933"/>
</dbReference>
<dbReference type="STRING" id="44689.Q54CE0"/>
<dbReference type="GlyGen" id="Q54CE0">
    <property type="glycosylation" value="1 site"/>
</dbReference>
<dbReference type="PaxDb" id="44689-DDB0233431"/>
<dbReference type="EnsemblProtists" id="EAL60936">
    <property type="protein sequence ID" value="EAL60936"/>
    <property type="gene ID" value="DDB_G0293168"/>
</dbReference>
<dbReference type="GeneID" id="8629001"/>
<dbReference type="KEGG" id="ddi:DDB_G0293168"/>
<dbReference type="dictyBase" id="DDB_G0293168">
    <property type="gene designation" value="ddx17"/>
</dbReference>
<dbReference type="VEuPathDB" id="AmoebaDB:DDB_G0293168"/>
<dbReference type="eggNOG" id="KOG0331">
    <property type="taxonomic scope" value="Eukaryota"/>
</dbReference>
<dbReference type="HOGENOM" id="CLU_003041_16_9_1"/>
<dbReference type="InParanoid" id="Q54CE0"/>
<dbReference type="OMA" id="QINICIC"/>
<dbReference type="PhylomeDB" id="Q54CE0"/>
<dbReference type="Reactome" id="R-DDI-3899300">
    <property type="pathway name" value="SUMOylation of transcription cofactors"/>
</dbReference>
<dbReference type="Reactome" id="R-DDI-72163">
    <property type="pathway name" value="mRNA Splicing - Major Pathway"/>
</dbReference>
<dbReference type="Reactome" id="R-DDI-9018519">
    <property type="pathway name" value="Estrogen-dependent gene expression"/>
</dbReference>
<dbReference type="PRO" id="PR:Q54CE0"/>
<dbReference type="Proteomes" id="UP000002195">
    <property type="component" value="Chromosome 6"/>
</dbReference>
<dbReference type="GO" id="GO:0005737">
    <property type="term" value="C:cytoplasm"/>
    <property type="evidence" value="ECO:0000318"/>
    <property type="project" value="GO_Central"/>
</dbReference>
<dbReference type="GO" id="GO:0005634">
    <property type="term" value="C:nucleus"/>
    <property type="evidence" value="ECO:0000250"/>
    <property type="project" value="dictyBase"/>
</dbReference>
<dbReference type="GO" id="GO:1990904">
    <property type="term" value="C:ribonucleoprotein complex"/>
    <property type="evidence" value="ECO:0000318"/>
    <property type="project" value="GO_Central"/>
</dbReference>
<dbReference type="GO" id="GO:0005524">
    <property type="term" value="F:ATP binding"/>
    <property type="evidence" value="ECO:0007669"/>
    <property type="project" value="UniProtKB-KW"/>
</dbReference>
<dbReference type="GO" id="GO:0016887">
    <property type="term" value="F:ATP hydrolysis activity"/>
    <property type="evidence" value="ECO:0007669"/>
    <property type="project" value="RHEA"/>
</dbReference>
<dbReference type="GO" id="GO:0003729">
    <property type="term" value="F:mRNA binding"/>
    <property type="evidence" value="ECO:0000318"/>
    <property type="project" value="GO_Central"/>
</dbReference>
<dbReference type="GO" id="GO:0003723">
    <property type="term" value="F:RNA binding"/>
    <property type="evidence" value="ECO:0000250"/>
    <property type="project" value="dictyBase"/>
</dbReference>
<dbReference type="GO" id="GO:0003724">
    <property type="term" value="F:RNA helicase activity"/>
    <property type="evidence" value="ECO:0000318"/>
    <property type="project" value="GO_Central"/>
</dbReference>
<dbReference type="GO" id="GO:0000380">
    <property type="term" value="P:alternative mRNA splicing, via spliceosome"/>
    <property type="evidence" value="ECO:0000318"/>
    <property type="project" value="GO_Central"/>
</dbReference>
<dbReference type="GO" id="GO:0000184">
    <property type="term" value="P:nuclear-transcribed mRNA catabolic process, nonsense-mediated decay"/>
    <property type="evidence" value="ECO:0007669"/>
    <property type="project" value="UniProtKB-KW"/>
</dbReference>
<dbReference type="GO" id="GO:0006364">
    <property type="term" value="P:rRNA processing"/>
    <property type="evidence" value="ECO:0007669"/>
    <property type="project" value="UniProtKB-KW"/>
</dbReference>
<dbReference type="CDD" id="cd17966">
    <property type="entry name" value="DEADc_DDX5_DDX17"/>
    <property type="match status" value="1"/>
</dbReference>
<dbReference type="CDD" id="cd18787">
    <property type="entry name" value="SF2_C_DEAD"/>
    <property type="match status" value="1"/>
</dbReference>
<dbReference type="FunFam" id="3.40.50.300:FF:000008">
    <property type="entry name" value="ATP-dependent RNA helicase RhlB"/>
    <property type="match status" value="1"/>
</dbReference>
<dbReference type="FunFam" id="3.40.50.300:FF:000079">
    <property type="entry name" value="probable ATP-dependent RNA helicase DDX17"/>
    <property type="match status" value="1"/>
</dbReference>
<dbReference type="Gene3D" id="3.40.50.300">
    <property type="entry name" value="P-loop containing nucleotide triphosphate hydrolases"/>
    <property type="match status" value="2"/>
</dbReference>
<dbReference type="InterPro" id="IPR011545">
    <property type="entry name" value="DEAD/DEAH_box_helicase_dom"/>
</dbReference>
<dbReference type="InterPro" id="IPR014001">
    <property type="entry name" value="Helicase_ATP-bd"/>
</dbReference>
<dbReference type="InterPro" id="IPR001650">
    <property type="entry name" value="Helicase_C-like"/>
</dbReference>
<dbReference type="InterPro" id="IPR027417">
    <property type="entry name" value="P-loop_NTPase"/>
</dbReference>
<dbReference type="InterPro" id="IPR000629">
    <property type="entry name" value="RNA-helicase_DEAD-box_CS"/>
</dbReference>
<dbReference type="InterPro" id="IPR014014">
    <property type="entry name" value="RNA_helicase_DEAD_Q_motif"/>
</dbReference>
<dbReference type="PANTHER" id="PTHR47958">
    <property type="entry name" value="ATP-DEPENDENT RNA HELICASE DBP3"/>
    <property type="match status" value="1"/>
</dbReference>
<dbReference type="Pfam" id="PF00270">
    <property type="entry name" value="DEAD"/>
    <property type="match status" value="1"/>
</dbReference>
<dbReference type="Pfam" id="PF00271">
    <property type="entry name" value="Helicase_C"/>
    <property type="match status" value="1"/>
</dbReference>
<dbReference type="SMART" id="SM00487">
    <property type="entry name" value="DEXDc"/>
    <property type="match status" value="1"/>
</dbReference>
<dbReference type="SMART" id="SM00490">
    <property type="entry name" value="HELICc"/>
    <property type="match status" value="1"/>
</dbReference>
<dbReference type="SUPFAM" id="SSF52540">
    <property type="entry name" value="P-loop containing nucleoside triphosphate hydrolases"/>
    <property type="match status" value="2"/>
</dbReference>
<dbReference type="PROSITE" id="PS00039">
    <property type="entry name" value="DEAD_ATP_HELICASE"/>
    <property type="match status" value="1"/>
</dbReference>
<dbReference type="PROSITE" id="PS51192">
    <property type="entry name" value="HELICASE_ATP_BIND_1"/>
    <property type="match status" value="1"/>
</dbReference>
<dbReference type="PROSITE" id="PS51194">
    <property type="entry name" value="HELICASE_CTER"/>
    <property type="match status" value="1"/>
</dbReference>
<dbReference type="PROSITE" id="PS51195">
    <property type="entry name" value="Q_MOTIF"/>
    <property type="match status" value="1"/>
</dbReference>
<reference key="1">
    <citation type="journal article" date="2005" name="Nature">
        <title>The genome of the social amoeba Dictyostelium discoideum.</title>
        <authorList>
            <person name="Eichinger L."/>
            <person name="Pachebat J.A."/>
            <person name="Gloeckner G."/>
            <person name="Rajandream M.A."/>
            <person name="Sucgang R."/>
            <person name="Berriman M."/>
            <person name="Song J."/>
            <person name="Olsen R."/>
            <person name="Szafranski K."/>
            <person name="Xu Q."/>
            <person name="Tunggal B."/>
            <person name="Kummerfeld S."/>
            <person name="Madera M."/>
            <person name="Konfortov B.A."/>
            <person name="Rivero F."/>
            <person name="Bankier A.T."/>
            <person name="Lehmann R."/>
            <person name="Hamlin N."/>
            <person name="Davies R."/>
            <person name="Gaudet P."/>
            <person name="Fey P."/>
            <person name="Pilcher K."/>
            <person name="Chen G."/>
            <person name="Saunders D."/>
            <person name="Sodergren E.J."/>
            <person name="Davis P."/>
            <person name="Kerhornou A."/>
            <person name="Nie X."/>
            <person name="Hall N."/>
            <person name="Anjard C."/>
            <person name="Hemphill L."/>
            <person name="Bason N."/>
            <person name="Farbrother P."/>
            <person name="Desany B."/>
            <person name="Just E."/>
            <person name="Morio T."/>
            <person name="Rost R."/>
            <person name="Churcher C.M."/>
            <person name="Cooper J."/>
            <person name="Haydock S."/>
            <person name="van Driessche N."/>
            <person name="Cronin A."/>
            <person name="Goodhead I."/>
            <person name="Muzny D.M."/>
            <person name="Mourier T."/>
            <person name="Pain A."/>
            <person name="Lu M."/>
            <person name="Harper D."/>
            <person name="Lindsay R."/>
            <person name="Hauser H."/>
            <person name="James K.D."/>
            <person name="Quiles M."/>
            <person name="Madan Babu M."/>
            <person name="Saito T."/>
            <person name="Buchrieser C."/>
            <person name="Wardroper A."/>
            <person name="Felder M."/>
            <person name="Thangavelu M."/>
            <person name="Johnson D."/>
            <person name="Knights A."/>
            <person name="Loulseged H."/>
            <person name="Mungall K.L."/>
            <person name="Oliver K."/>
            <person name="Price C."/>
            <person name="Quail M.A."/>
            <person name="Urushihara H."/>
            <person name="Hernandez J."/>
            <person name="Rabbinowitsch E."/>
            <person name="Steffen D."/>
            <person name="Sanders M."/>
            <person name="Ma J."/>
            <person name="Kohara Y."/>
            <person name="Sharp S."/>
            <person name="Simmonds M.N."/>
            <person name="Spiegler S."/>
            <person name="Tivey A."/>
            <person name="Sugano S."/>
            <person name="White B."/>
            <person name="Walker D."/>
            <person name="Woodward J.R."/>
            <person name="Winckler T."/>
            <person name="Tanaka Y."/>
            <person name="Shaulsky G."/>
            <person name="Schleicher M."/>
            <person name="Weinstock G.M."/>
            <person name="Rosenthal A."/>
            <person name="Cox E.C."/>
            <person name="Chisholm R.L."/>
            <person name="Gibbs R.A."/>
            <person name="Loomis W.F."/>
            <person name="Platzer M."/>
            <person name="Kay R.R."/>
            <person name="Williams J.G."/>
            <person name="Dear P.H."/>
            <person name="Noegel A.A."/>
            <person name="Barrell B.G."/>
            <person name="Kuspa A."/>
        </authorList>
    </citation>
    <scope>NUCLEOTIDE SEQUENCE [LARGE SCALE GENOMIC DNA]</scope>
    <source>
        <strain>AX4</strain>
    </source>
</reference>
<proteinExistence type="inferred from homology"/>
<name>DDX17_DICDI</name>